<gene>
    <name evidence="1" type="primary">murG</name>
    <name type="ordered locus">APP7_0018</name>
</gene>
<reference key="1">
    <citation type="submission" date="2008-06" db="EMBL/GenBank/DDBJ databases">
        <title>Genome and proteome analysis of A. pleuropneumoniae serotype 7.</title>
        <authorList>
            <person name="Linke B."/>
            <person name="Buettner F."/>
            <person name="Martinez-Arias R."/>
            <person name="Goesmann A."/>
            <person name="Baltes N."/>
            <person name="Tegetmeyer H."/>
            <person name="Singh M."/>
            <person name="Gerlach G.F."/>
        </authorList>
    </citation>
    <scope>NUCLEOTIDE SEQUENCE [LARGE SCALE GENOMIC DNA]</scope>
    <source>
        <strain>AP76</strain>
    </source>
</reference>
<comment type="function">
    <text evidence="1">Cell wall formation. Catalyzes the transfer of a GlcNAc subunit on undecaprenyl-pyrophosphoryl-MurNAc-pentapeptide (lipid intermediate I) to form undecaprenyl-pyrophosphoryl-MurNAc-(pentapeptide)GlcNAc (lipid intermediate II).</text>
</comment>
<comment type="catalytic activity">
    <reaction evidence="1">
        <text>di-trans,octa-cis-undecaprenyl diphospho-N-acetyl-alpha-D-muramoyl-L-alanyl-D-glutamyl-meso-2,6-diaminopimeloyl-D-alanyl-D-alanine + UDP-N-acetyl-alpha-D-glucosamine = di-trans,octa-cis-undecaprenyl diphospho-[N-acetyl-alpha-D-glucosaminyl-(1-&gt;4)]-N-acetyl-alpha-D-muramoyl-L-alanyl-D-glutamyl-meso-2,6-diaminopimeloyl-D-alanyl-D-alanine + UDP + H(+)</text>
        <dbReference type="Rhea" id="RHEA:31227"/>
        <dbReference type="ChEBI" id="CHEBI:15378"/>
        <dbReference type="ChEBI" id="CHEBI:57705"/>
        <dbReference type="ChEBI" id="CHEBI:58223"/>
        <dbReference type="ChEBI" id="CHEBI:61387"/>
        <dbReference type="ChEBI" id="CHEBI:61388"/>
        <dbReference type="EC" id="2.4.1.227"/>
    </reaction>
</comment>
<comment type="pathway">
    <text evidence="1">Cell wall biogenesis; peptidoglycan biosynthesis.</text>
</comment>
<comment type="subcellular location">
    <subcellularLocation>
        <location evidence="1">Cell inner membrane</location>
        <topology evidence="1">Peripheral membrane protein</topology>
        <orientation evidence="1">Cytoplasmic side</orientation>
    </subcellularLocation>
</comment>
<comment type="similarity">
    <text evidence="1">Belongs to the glycosyltransferase 28 family. MurG subfamily.</text>
</comment>
<name>MURG_ACTP7</name>
<feature type="chain" id="PRO_1000090400" description="UDP-N-acetylglucosamine--N-acetylmuramyl-(pentapeptide) pyrophosphoryl-undecaprenol N-acetylglucosamine transferase">
    <location>
        <begin position="1"/>
        <end position="351"/>
    </location>
</feature>
<feature type="binding site" evidence="1">
    <location>
        <begin position="12"/>
        <end position="14"/>
    </location>
    <ligand>
        <name>UDP-N-acetyl-alpha-D-glucosamine</name>
        <dbReference type="ChEBI" id="CHEBI:57705"/>
    </ligand>
</feature>
<feature type="binding site" evidence="1">
    <location>
        <position position="124"/>
    </location>
    <ligand>
        <name>UDP-N-acetyl-alpha-D-glucosamine</name>
        <dbReference type="ChEBI" id="CHEBI:57705"/>
    </ligand>
</feature>
<feature type="binding site" evidence="1">
    <location>
        <position position="160"/>
    </location>
    <ligand>
        <name>UDP-N-acetyl-alpha-D-glucosamine</name>
        <dbReference type="ChEBI" id="CHEBI:57705"/>
    </ligand>
</feature>
<feature type="binding site" evidence="1">
    <location>
        <position position="188"/>
    </location>
    <ligand>
        <name>UDP-N-acetyl-alpha-D-glucosamine</name>
        <dbReference type="ChEBI" id="CHEBI:57705"/>
    </ligand>
</feature>
<feature type="binding site" evidence="1">
    <location>
        <position position="239"/>
    </location>
    <ligand>
        <name>UDP-N-acetyl-alpha-D-glucosamine</name>
        <dbReference type="ChEBI" id="CHEBI:57705"/>
    </ligand>
</feature>
<feature type="binding site" evidence="1">
    <location>
        <begin position="258"/>
        <end position="263"/>
    </location>
    <ligand>
        <name>UDP-N-acetyl-alpha-D-glucosamine</name>
        <dbReference type="ChEBI" id="CHEBI:57705"/>
    </ligand>
</feature>
<feature type="binding site" evidence="1">
    <location>
        <position position="283"/>
    </location>
    <ligand>
        <name>UDP-N-acetyl-alpha-D-glucosamine</name>
        <dbReference type="ChEBI" id="CHEBI:57705"/>
    </ligand>
</feature>
<organism>
    <name type="scientific">Actinobacillus pleuropneumoniae serotype 7 (strain AP76)</name>
    <dbReference type="NCBI Taxonomy" id="537457"/>
    <lineage>
        <taxon>Bacteria</taxon>
        <taxon>Pseudomonadati</taxon>
        <taxon>Pseudomonadota</taxon>
        <taxon>Gammaproteobacteria</taxon>
        <taxon>Pasteurellales</taxon>
        <taxon>Pasteurellaceae</taxon>
        <taxon>Actinobacillus</taxon>
    </lineage>
</organism>
<accession>B3GZK8</accession>
<proteinExistence type="inferred from homology"/>
<dbReference type="EC" id="2.4.1.227" evidence="1"/>
<dbReference type="EMBL" id="CP001091">
    <property type="protein sequence ID" value="ACE60670.1"/>
    <property type="molecule type" value="Genomic_DNA"/>
</dbReference>
<dbReference type="RefSeq" id="WP_005618675.1">
    <property type="nucleotide sequence ID" value="NC_010939.1"/>
</dbReference>
<dbReference type="SMR" id="B3GZK8"/>
<dbReference type="CAZy" id="GT28">
    <property type="family name" value="Glycosyltransferase Family 28"/>
</dbReference>
<dbReference type="KEGG" id="apa:APP7_0018"/>
<dbReference type="HOGENOM" id="CLU_037404_2_0_6"/>
<dbReference type="UniPathway" id="UPA00219"/>
<dbReference type="Proteomes" id="UP000001226">
    <property type="component" value="Chromosome"/>
</dbReference>
<dbReference type="GO" id="GO:0005886">
    <property type="term" value="C:plasma membrane"/>
    <property type="evidence" value="ECO:0007669"/>
    <property type="project" value="UniProtKB-SubCell"/>
</dbReference>
<dbReference type="GO" id="GO:0051991">
    <property type="term" value="F:UDP-N-acetyl-D-glucosamine:N-acetylmuramoyl-L-alanyl-D-glutamyl-meso-2,6-diaminopimelyl-D-alanyl-D-alanine-diphosphoundecaprenol 4-beta-N-acetylglucosaminlytransferase activity"/>
    <property type="evidence" value="ECO:0007669"/>
    <property type="project" value="RHEA"/>
</dbReference>
<dbReference type="GO" id="GO:0050511">
    <property type="term" value="F:undecaprenyldiphospho-muramoylpentapeptide beta-N-acetylglucosaminyltransferase activity"/>
    <property type="evidence" value="ECO:0007669"/>
    <property type="project" value="UniProtKB-UniRule"/>
</dbReference>
<dbReference type="GO" id="GO:0005975">
    <property type="term" value="P:carbohydrate metabolic process"/>
    <property type="evidence" value="ECO:0007669"/>
    <property type="project" value="InterPro"/>
</dbReference>
<dbReference type="GO" id="GO:0051301">
    <property type="term" value="P:cell division"/>
    <property type="evidence" value="ECO:0007669"/>
    <property type="project" value="UniProtKB-KW"/>
</dbReference>
<dbReference type="GO" id="GO:0071555">
    <property type="term" value="P:cell wall organization"/>
    <property type="evidence" value="ECO:0007669"/>
    <property type="project" value="UniProtKB-KW"/>
</dbReference>
<dbReference type="GO" id="GO:0030259">
    <property type="term" value="P:lipid glycosylation"/>
    <property type="evidence" value="ECO:0007669"/>
    <property type="project" value="UniProtKB-UniRule"/>
</dbReference>
<dbReference type="GO" id="GO:0009252">
    <property type="term" value="P:peptidoglycan biosynthetic process"/>
    <property type="evidence" value="ECO:0007669"/>
    <property type="project" value="UniProtKB-UniRule"/>
</dbReference>
<dbReference type="GO" id="GO:0008360">
    <property type="term" value="P:regulation of cell shape"/>
    <property type="evidence" value="ECO:0007669"/>
    <property type="project" value="UniProtKB-KW"/>
</dbReference>
<dbReference type="CDD" id="cd03785">
    <property type="entry name" value="GT28_MurG"/>
    <property type="match status" value="1"/>
</dbReference>
<dbReference type="Gene3D" id="3.40.50.2000">
    <property type="entry name" value="Glycogen Phosphorylase B"/>
    <property type="match status" value="2"/>
</dbReference>
<dbReference type="HAMAP" id="MF_00033">
    <property type="entry name" value="MurG"/>
    <property type="match status" value="1"/>
</dbReference>
<dbReference type="InterPro" id="IPR006009">
    <property type="entry name" value="GlcNAc_MurG"/>
</dbReference>
<dbReference type="InterPro" id="IPR007235">
    <property type="entry name" value="Glyco_trans_28_C"/>
</dbReference>
<dbReference type="InterPro" id="IPR004276">
    <property type="entry name" value="GlycoTrans_28_N"/>
</dbReference>
<dbReference type="NCBIfam" id="TIGR01133">
    <property type="entry name" value="murG"/>
    <property type="match status" value="1"/>
</dbReference>
<dbReference type="PANTHER" id="PTHR21015:SF22">
    <property type="entry name" value="GLYCOSYLTRANSFERASE"/>
    <property type="match status" value="1"/>
</dbReference>
<dbReference type="PANTHER" id="PTHR21015">
    <property type="entry name" value="UDP-N-ACETYLGLUCOSAMINE--N-ACETYLMURAMYL-(PENTAPEPTIDE) PYROPHOSPHORYL-UNDECAPRENOL N-ACETYLGLUCOSAMINE TRANSFERASE 1"/>
    <property type="match status" value="1"/>
</dbReference>
<dbReference type="Pfam" id="PF04101">
    <property type="entry name" value="Glyco_tran_28_C"/>
    <property type="match status" value="1"/>
</dbReference>
<dbReference type="Pfam" id="PF03033">
    <property type="entry name" value="Glyco_transf_28"/>
    <property type="match status" value="1"/>
</dbReference>
<dbReference type="SUPFAM" id="SSF53756">
    <property type="entry name" value="UDP-Glycosyltransferase/glycogen phosphorylase"/>
    <property type="match status" value="1"/>
</dbReference>
<evidence type="ECO:0000255" key="1">
    <source>
        <dbReference type="HAMAP-Rule" id="MF_00033"/>
    </source>
</evidence>
<protein>
    <recommendedName>
        <fullName evidence="1">UDP-N-acetylglucosamine--N-acetylmuramyl-(pentapeptide) pyrophosphoryl-undecaprenol N-acetylglucosamine transferase</fullName>
        <ecNumber evidence="1">2.4.1.227</ecNumber>
    </recommendedName>
    <alternativeName>
        <fullName evidence="1">Undecaprenyl-PP-MurNAc-pentapeptide-UDPGlcNAc GlcNAc transferase</fullName>
    </alternativeName>
</protein>
<sequence length="351" mass="37594">MAKKLLVMAGGTGGHVFPAIAVARELQKQGWEIRWLGTKDRMEADLVPKHGIPIEFIQISGLKGKGIGALLKAPFAIFKAVMQARKIIKNYQPDAVLGMGGYVSGPGGIAAKLCGVPVILHEQNAVAGLTNVWLSKIACRVLQAFPTAFPNAEVVGNPVREDLAQLEAPEIRFAERGYPINILVMGGSQGARVINQTVPEVAKQLGNNVFISHQVGKGNLGGVEEIYQATGNGIAAEFIDDMAQAYSWADLVICRSGALTVCEIAAAGLPAIFVPYQHKDRQQYLNATYLADGGAAIIIEQQDFTPQTLLNVLQPLIADRRKLTEMAVKARAKATPTAAQRVAEVIIEQAK</sequence>
<keyword id="KW-0131">Cell cycle</keyword>
<keyword id="KW-0132">Cell division</keyword>
<keyword id="KW-0997">Cell inner membrane</keyword>
<keyword id="KW-1003">Cell membrane</keyword>
<keyword id="KW-0133">Cell shape</keyword>
<keyword id="KW-0961">Cell wall biogenesis/degradation</keyword>
<keyword id="KW-0328">Glycosyltransferase</keyword>
<keyword id="KW-0472">Membrane</keyword>
<keyword id="KW-0573">Peptidoglycan synthesis</keyword>
<keyword id="KW-0808">Transferase</keyword>